<proteinExistence type="evidence at protein level"/>
<comment type="function">
    <text evidence="2 5">Essential component of the PAM complex, a complex required for the translocation of transit peptide-containing proteins from the inner membrane into the mitochondrial matrix in an ATP-dependent manner (By similarity). Seems to control the nucleotide-dependent binding of mitochondrial HSP70 to substrate proteins (PubMed:11311562).</text>
</comment>
<comment type="subunit">
    <text evidence="2 5">Probable component of the PAM complex at least composed of a mitochondrial HSP70 protein, GRPEL1 or GRPEL2, TIMM44, TIMM16/PAM16 and TIMM14/DNAJC19 (By similarity). Binds to HSP70, HSC70 and HSJ1B (PubMed:11311562).</text>
</comment>
<comment type="interaction">
    <interactant intactId="EBI-1043499">
        <id>Q9HAV7</id>
    </interactant>
    <interactant intactId="EBI-10961624">
        <id>Q2TAC2-2</id>
        <label>CCDC57</label>
    </interactant>
    <organismsDiffer>false</organismsDiffer>
    <experiments>3</experiments>
</comment>
<comment type="interaction">
    <interactant intactId="EBI-1043499">
        <id>Q9HAV7</id>
    </interactant>
    <interactant intactId="EBI-750827">
        <id>P07902</id>
        <label>GALT</label>
    </interactant>
    <organismsDiffer>false</organismsDiffer>
    <experiments>3</experiments>
</comment>
<comment type="interaction">
    <interactant intactId="EBI-1043499">
        <id>Q9HAV7</id>
    </interactant>
    <interactant intactId="EBI-1043499">
        <id>Q9HAV7</id>
        <label>GRPEL1</label>
    </interactant>
    <organismsDiffer>false</organismsDiffer>
    <experiments>5</experiments>
</comment>
<comment type="interaction">
    <interactant intactId="EBI-1043499">
        <id>Q9HAV7</id>
    </interactant>
    <interactant intactId="EBI-354932">
        <id>P38646</id>
        <label>HSPA9</label>
    </interactant>
    <organismsDiffer>false</organismsDiffer>
    <experiments>5</experiments>
</comment>
<comment type="interaction">
    <interactant intactId="EBI-1043499">
        <id>Q9HAV7</id>
    </interactant>
    <interactant intactId="EBI-1055079">
        <id>O15160</id>
        <label>POLR1C</label>
    </interactant>
    <organismsDiffer>false</organismsDiffer>
    <experiments>4</experiments>
</comment>
<comment type="interaction">
    <interactant intactId="EBI-1043499">
        <id>Q9HAV7</id>
    </interactant>
    <interactant intactId="EBI-742688">
        <id>Q9NZD8</id>
        <label>SPG21</label>
    </interactant>
    <organismsDiffer>false</organismsDiffer>
    <experiments>3</experiments>
</comment>
<comment type="subcellular location">
    <subcellularLocation>
        <location evidence="5">Mitochondrion matrix</location>
    </subcellularLocation>
</comment>
<comment type="similarity">
    <text evidence="6">Belongs to the GrpE family.</text>
</comment>
<organism>
    <name type="scientific">Homo sapiens</name>
    <name type="common">Human</name>
    <dbReference type="NCBI Taxonomy" id="9606"/>
    <lineage>
        <taxon>Eukaryota</taxon>
        <taxon>Metazoa</taxon>
        <taxon>Chordata</taxon>
        <taxon>Craniata</taxon>
        <taxon>Vertebrata</taxon>
        <taxon>Euteleostomi</taxon>
        <taxon>Mammalia</taxon>
        <taxon>Eutheria</taxon>
        <taxon>Euarchontoglires</taxon>
        <taxon>Primates</taxon>
        <taxon>Haplorrhini</taxon>
        <taxon>Catarrhini</taxon>
        <taxon>Hominidae</taxon>
        <taxon>Homo</taxon>
    </lineage>
</organism>
<sequence length="217" mass="24279">MAAQCVRLARRSLPALALSLRPSPRLLCTATKQKNSGQNLEEDMGQSEQKADPPATEKTLLEEKVKLEEQLKETVEKYKRALADTENLRQRSQKLVEEAKLYGIQAFCKDLLEVADVLEKATQCVPKEEIKDDNPHLKNLYEGLVMTEVQIQKVFTKHGLLKLNPVGAKFDPYEHEALFHTPVEGKEPGTVALVSKVGYKLHGRTLRPALVGVVKEA</sequence>
<reference key="1">
    <citation type="journal article" date="2004" name="Nat. Genet.">
        <title>Complete sequencing and characterization of 21,243 full-length human cDNAs.</title>
        <authorList>
            <person name="Ota T."/>
            <person name="Suzuki Y."/>
            <person name="Nishikawa T."/>
            <person name="Otsuki T."/>
            <person name="Sugiyama T."/>
            <person name="Irie R."/>
            <person name="Wakamatsu A."/>
            <person name="Hayashi K."/>
            <person name="Sato H."/>
            <person name="Nagai K."/>
            <person name="Kimura K."/>
            <person name="Makita H."/>
            <person name="Sekine M."/>
            <person name="Obayashi M."/>
            <person name="Nishi T."/>
            <person name="Shibahara T."/>
            <person name="Tanaka T."/>
            <person name="Ishii S."/>
            <person name="Yamamoto J."/>
            <person name="Saito K."/>
            <person name="Kawai Y."/>
            <person name="Isono Y."/>
            <person name="Nakamura Y."/>
            <person name="Nagahari K."/>
            <person name="Murakami K."/>
            <person name="Yasuda T."/>
            <person name="Iwayanagi T."/>
            <person name="Wagatsuma M."/>
            <person name="Shiratori A."/>
            <person name="Sudo H."/>
            <person name="Hosoiri T."/>
            <person name="Kaku Y."/>
            <person name="Kodaira H."/>
            <person name="Kondo H."/>
            <person name="Sugawara M."/>
            <person name="Takahashi M."/>
            <person name="Kanda K."/>
            <person name="Yokoi T."/>
            <person name="Furuya T."/>
            <person name="Kikkawa E."/>
            <person name="Omura Y."/>
            <person name="Abe K."/>
            <person name="Kamihara K."/>
            <person name="Katsuta N."/>
            <person name="Sato K."/>
            <person name="Tanikawa M."/>
            <person name="Yamazaki M."/>
            <person name="Ninomiya K."/>
            <person name="Ishibashi T."/>
            <person name="Yamashita H."/>
            <person name="Murakawa K."/>
            <person name="Fujimori K."/>
            <person name="Tanai H."/>
            <person name="Kimata M."/>
            <person name="Watanabe M."/>
            <person name="Hiraoka S."/>
            <person name="Chiba Y."/>
            <person name="Ishida S."/>
            <person name="Ono Y."/>
            <person name="Takiguchi S."/>
            <person name="Watanabe S."/>
            <person name="Yosida M."/>
            <person name="Hotuta T."/>
            <person name="Kusano J."/>
            <person name="Kanehori K."/>
            <person name="Takahashi-Fujii A."/>
            <person name="Hara H."/>
            <person name="Tanase T.-O."/>
            <person name="Nomura Y."/>
            <person name="Togiya S."/>
            <person name="Komai F."/>
            <person name="Hara R."/>
            <person name="Takeuchi K."/>
            <person name="Arita M."/>
            <person name="Imose N."/>
            <person name="Musashino K."/>
            <person name="Yuuki H."/>
            <person name="Oshima A."/>
            <person name="Sasaki N."/>
            <person name="Aotsuka S."/>
            <person name="Yoshikawa Y."/>
            <person name="Matsunawa H."/>
            <person name="Ichihara T."/>
            <person name="Shiohata N."/>
            <person name="Sano S."/>
            <person name="Moriya S."/>
            <person name="Momiyama H."/>
            <person name="Satoh N."/>
            <person name="Takami S."/>
            <person name="Terashima Y."/>
            <person name="Suzuki O."/>
            <person name="Nakagawa S."/>
            <person name="Senoh A."/>
            <person name="Mizoguchi H."/>
            <person name="Goto Y."/>
            <person name="Shimizu F."/>
            <person name="Wakebe H."/>
            <person name="Hishigaki H."/>
            <person name="Watanabe T."/>
            <person name="Sugiyama A."/>
            <person name="Takemoto M."/>
            <person name="Kawakami B."/>
            <person name="Yamazaki M."/>
            <person name="Watanabe K."/>
            <person name="Kumagai A."/>
            <person name="Itakura S."/>
            <person name="Fukuzumi Y."/>
            <person name="Fujimori Y."/>
            <person name="Komiyama M."/>
            <person name="Tashiro H."/>
            <person name="Tanigami A."/>
            <person name="Fujiwara T."/>
            <person name="Ono T."/>
            <person name="Yamada K."/>
            <person name="Fujii Y."/>
            <person name="Ozaki K."/>
            <person name="Hirao M."/>
            <person name="Ohmori Y."/>
            <person name="Kawabata A."/>
            <person name="Hikiji T."/>
            <person name="Kobatake N."/>
            <person name="Inagaki H."/>
            <person name="Ikema Y."/>
            <person name="Okamoto S."/>
            <person name="Okitani R."/>
            <person name="Kawakami T."/>
            <person name="Noguchi S."/>
            <person name="Itoh T."/>
            <person name="Shigeta K."/>
            <person name="Senba T."/>
            <person name="Matsumura K."/>
            <person name="Nakajima Y."/>
            <person name="Mizuno T."/>
            <person name="Morinaga M."/>
            <person name="Sasaki M."/>
            <person name="Togashi T."/>
            <person name="Oyama M."/>
            <person name="Hata H."/>
            <person name="Watanabe M."/>
            <person name="Komatsu T."/>
            <person name="Mizushima-Sugano J."/>
            <person name="Satoh T."/>
            <person name="Shirai Y."/>
            <person name="Takahashi Y."/>
            <person name="Nakagawa K."/>
            <person name="Okumura K."/>
            <person name="Nagase T."/>
            <person name="Nomura N."/>
            <person name="Kikuchi H."/>
            <person name="Masuho Y."/>
            <person name="Yamashita R."/>
            <person name="Nakai K."/>
            <person name="Yada T."/>
            <person name="Nakamura Y."/>
            <person name="Ohara O."/>
            <person name="Isogai T."/>
            <person name="Sugano S."/>
        </authorList>
    </citation>
    <scope>NUCLEOTIDE SEQUENCE [LARGE SCALE MRNA]</scope>
    <source>
        <tissue>Uterus</tissue>
    </source>
</reference>
<reference key="2">
    <citation type="journal article" date="2001" name="Gene">
        <title>Identification and characterization of a human mitochondrial homologue of the bacterial co-chaperone GrpE.</title>
        <authorList>
            <person name="Choglay A.A."/>
            <person name="Chapple J.P."/>
            <person name="Blatch G.L."/>
            <person name="Cheetham M.E."/>
        </authorList>
    </citation>
    <scope>NUCLEOTIDE SEQUENCE [MRNA] OF 2-117</scope>
    <scope>CHARACTERIZATION</scope>
    <scope>FUNCTION</scope>
    <scope>SUBCELLULAR LOCATION</scope>
    <scope>INTERACTION WITH HSP70; HSC70 AND HSJ1B</scope>
    <source>
        <tissue>Brain</tissue>
    </source>
</reference>
<reference key="3">
    <citation type="submission" date="2003-07" db="EMBL/GenBank/DDBJ databases">
        <title>Cloning and characterization of a novel human cDNA homology to R.norvegicus stress-inducible chaperone mt-GrpE#1 mRNA.</title>
        <authorList>
            <person name="Wan Y.Z."/>
            <person name="Yu L."/>
            <person name="Zhang H.L."/>
            <person name="Fu Q."/>
            <person name="Jiang J.X."/>
            <person name="Zhao S.Y."/>
        </authorList>
    </citation>
    <scope>NUCLEOTIDE SEQUENCE [MRNA]</scope>
</reference>
<reference key="4">
    <citation type="submission" date="2001-02" db="EMBL/GenBank/DDBJ databases">
        <title>Full-length cDNA libraries and normalization.</title>
        <authorList>
            <person name="Li W.B."/>
            <person name="Gruber C."/>
            <person name="Jessee J."/>
            <person name="Polayes D."/>
        </authorList>
    </citation>
    <scope>NUCLEOTIDE SEQUENCE [LARGE SCALE MRNA]</scope>
    <source>
        <tissue>Placenta</tissue>
    </source>
</reference>
<reference key="5">
    <citation type="submission" date="2005-09" db="EMBL/GenBank/DDBJ databases">
        <authorList>
            <person name="Mural R.J."/>
            <person name="Istrail S."/>
            <person name="Sutton G.G."/>
            <person name="Florea L."/>
            <person name="Halpern A.L."/>
            <person name="Mobarry C.M."/>
            <person name="Lippert R."/>
            <person name="Walenz B."/>
            <person name="Shatkay H."/>
            <person name="Dew I."/>
            <person name="Miller J.R."/>
            <person name="Flanigan M.J."/>
            <person name="Edwards N.J."/>
            <person name="Bolanos R."/>
            <person name="Fasulo D."/>
            <person name="Halldorsson B.V."/>
            <person name="Hannenhalli S."/>
            <person name="Turner R."/>
            <person name="Yooseph S."/>
            <person name="Lu F."/>
            <person name="Nusskern D.R."/>
            <person name="Shue B.C."/>
            <person name="Zheng X.H."/>
            <person name="Zhong F."/>
            <person name="Delcher A.L."/>
            <person name="Huson D.H."/>
            <person name="Kravitz S.A."/>
            <person name="Mouchard L."/>
            <person name="Reinert K."/>
            <person name="Remington K.A."/>
            <person name="Clark A.G."/>
            <person name="Waterman M.S."/>
            <person name="Eichler E.E."/>
            <person name="Adams M.D."/>
            <person name="Hunkapiller M.W."/>
            <person name="Myers E.W."/>
            <person name="Venter J.C."/>
        </authorList>
    </citation>
    <scope>NUCLEOTIDE SEQUENCE [LARGE SCALE GENOMIC DNA]</scope>
</reference>
<reference key="6">
    <citation type="journal article" date="2004" name="Genome Res.">
        <title>The status, quality, and expansion of the NIH full-length cDNA project: the Mammalian Gene Collection (MGC).</title>
        <authorList>
            <consortium name="The MGC Project Team"/>
        </authorList>
    </citation>
    <scope>NUCLEOTIDE SEQUENCE [LARGE SCALE MRNA]</scope>
    <source>
        <tissue>Testis</tissue>
    </source>
</reference>
<reference key="7">
    <citation type="journal article" date="2009" name="Science">
        <title>Lysine acetylation targets protein complexes and co-regulates major cellular functions.</title>
        <authorList>
            <person name="Choudhary C."/>
            <person name="Kumar C."/>
            <person name="Gnad F."/>
            <person name="Nielsen M.L."/>
            <person name="Rehman M."/>
            <person name="Walther T.C."/>
            <person name="Olsen J.V."/>
            <person name="Mann M."/>
        </authorList>
    </citation>
    <scope>ACETYLATION [LARGE SCALE ANALYSIS] AT LYS-215</scope>
    <scope>IDENTIFICATION BY MASS SPECTROMETRY [LARGE SCALE ANALYSIS]</scope>
</reference>
<reference key="8">
    <citation type="journal article" date="2011" name="BMC Syst. Biol.">
        <title>Initial characterization of the human central proteome.</title>
        <authorList>
            <person name="Burkard T.R."/>
            <person name="Planyavsky M."/>
            <person name="Kaupe I."/>
            <person name="Breitwieser F.P."/>
            <person name="Buerckstuemmer T."/>
            <person name="Bennett K.L."/>
            <person name="Superti-Furga G."/>
            <person name="Colinge J."/>
        </authorList>
    </citation>
    <scope>IDENTIFICATION BY MASS SPECTROMETRY [LARGE SCALE ANALYSIS]</scope>
</reference>
<reference key="9">
    <citation type="journal article" date="2014" name="J. Proteomics">
        <title>An enzyme assisted RP-RPLC approach for in-depth analysis of human liver phosphoproteome.</title>
        <authorList>
            <person name="Bian Y."/>
            <person name="Song C."/>
            <person name="Cheng K."/>
            <person name="Dong M."/>
            <person name="Wang F."/>
            <person name="Huang J."/>
            <person name="Sun D."/>
            <person name="Wang L."/>
            <person name="Ye M."/>
            <person name="Zou H."/>
        </authorList>
    </citation>
    <scope>IDENTIFICATION BY MASS SPECTROMETRY [LARGE SCALE ANALYSIS]</scope>
    <source>
        <tissue>Liver</tissue>
    </source>
</reference>
<reference key="10">
    <citation type="journal article" date="2015" name="Proteomics">
        <title>N-terminome analysis of the human mitochondrial proteome.</title>
        <authorList>
            <person name="Vaca Jacome A.S."/>
            <person name="Rabilloud T."/>
            <person name="Schaeffer-Reiss C."/>
            <person name="Rompais M."/>
            <person name="Ayoub D."/>
            <person name="Lane L."/>
            <person name="Bairoch A."/>
            <person name="Van Dorsselaer A."/>
            <person name="Carapito C."/>
        </authorList>
    </citation>
    <scope>IDENTIFICATION BY MASS SPECTROMETRY [LARGE SCALE ANALYSIS]</scope>
</reference>
<feature type="transit peptide" description="Mitochondrion" evidence="1">
    <location>
        <begin position="1"/>
        <end position="27"/>
    </location>
</feature>
<feature type="chain" id="PRO_0000013049" description="GrpE protein homolog 1, mitochondrial">
    <location>
        <begin position="28"/>
        <end position="217"/>
    </location>
</feature>
<feature type="region of interest" description="Disordered" evidence="4">
    <location>
        <begin position="29"/>
        <end position="56"/>
    </location>
</feature>
<feature type="compositionally biased region" description="Polar residues" evidence="4">
    <location>
        <begin position="30"/>
        <end position="39"/>
    </location>
</feature>
<feature type="modified residue" description="N6-acetyllysine; alternate" evidence="3">
    <location>
        <position position="94"/>
    </location>
</feature>
<feature type="modified residue" description="N6-succinyllysine; alternate" evidence="3">
    <location>
        <position position="94"/>
    </location>
</feature>
<feature type="modified residue" description="N6-acetyllysine" evidence="3">
    <location>
        <position position="100"/>
    </location>
</feature>
<feature type="modified residue" description="N6-succinyllysine" evidence="3">
    <location>
        <position position="120"/>
    </location>
</feature>
<feature type="modified residue" description="N6-acetyllysine; alternate" evidence="7">
    <location>
        <position position="215"/>
    </location>
</feature>
<feature type="modified residue" description="N6-succinyllysine; alternate" evidence="3">
    <location>
        <position position="215"/>
    </location>
</feature>
<gene>
    <name type="primary">GRPEL1</name>
    <name type="synonym">GREPEL1</name>
</gene>
<name>GRPE1_HUMAN</name>
<accession>Q9HAV7</accession>
<accession>B2R783</accession>
<accession>Q549M6</accession>
<dbReference type="EMBL" id="AK312882">
    <property type="protein sequence ID" value="BAG35730.1"/>
    <property type="molecule type" value="mRNA"/>
</dbReference>
<dbReference type="EMBL" id="AF298592">
    <property type="protein sequence ID" value="AAG31605.1"/>
    <property type="molecule type" value="mRNA"/>
</dbReference>
<dbReference type="EMBL" id="AF087896">
    <property type="protein sequence ID" value="AAP97195.1"/>
    <property type="molecule type" value="mRNA"/>
</dbReference>
<dbReference type="EMBL" id="AL542571">
    <property type="status" value="NOT_ANNOTATED_CDS"/>
    <property type="molecule type" value="mRNA"/>
</dbReference>
<dbReference type="EMBL" id="CH471131">
    <property type="protein sequence ID" value="EAW82371.1"/>
    <property type="molecule type" value="Genomic_DNA"/>
</dbReference>
<dbReference type="EMBL" id="BC024242">
    <property type="protein sequence ID" value="AAH24242.1"/>
    <property type="molecule type" value="mRNA"/>
</dbReference>
<dbReference type="CCDS" id="CCDS3396.1"/>
<dbReference type="RefSeq" id="NP_079472.1">
    <property type="nucleotide sequence ID" value="NM_025196.4"/>
</dbReference>
<dbReference type="PDB" id="9BLS">
    <property type="method" value="EM"/>
    <property type="resolution" value="2.96 A"/>
    <property type="chains" value="B/C=59-217"/>
</dbReference>
<dbReference type="PDB" id="9BLT">
    <property type="method" value="EM"/>
    <property type="resolution" value="3.38 A"/>
    <property type="chains" value="B/C=59-217"/>
</dbReference>
<dbReference type="PDB" id="9BLU">
    <property type="method" value="EM"/>
    <property type="resolution" value="3.38 A"/>
    <property type="chains" value="B/C=59-217"/>
</dbReference>
<dbReference type="PDBsum" id="9BLS"/>
<dbReference type="PDBsum" id="9BLT"/>
<dbReference type="PDBsum" id="9BLU"/>
<dbReference type="EMDB" id="EMD-44675"/>
<dbReference type="EMDB" id="EMD-44676"/>
<dbReference type="EMDB" id="EMD-44677"/>
<dbReference type="SMR" id="Q9HAV7"/>
<dbReference type="BioGRID" id="123210">
    <property type="interactions" value="226"/>
</dbReference>
<dbReference type="ComplexPortal" id="CPX-6129">
    <property type="entry name" value="TIM23 mitochondrial inner membrane pre-sequence translocase complex, TIM17A variant"/>
</dbReference>
<dbReference type="ComplexPortal" id="CPX-6130">
    <property type="entry name" value="TIM23 mitochondrial inner membrane pre-sequence translocase complex, TIM17B variant"/>
</dbReference>
<dbReference type="CORUM" id="Q9HAV7"/>
<dbReference type="FunCoup" id="Q9HAV7">
    <property type="interactions" value="2774"/>
</dbReference>
<dbReference type="IntAct" id="Q9HAV7">
    <property type="interactions" value="80"/>
</dbReference>
<dbReference type="MINT" id="Q9HAV7"/>
<dbReference type="STRING" id="9606.ENSP00000264954"/>
<dbReference type="GlyGen" id="Q9HAV7">
    <property type="glycosylation" value="1 site, 1 O-linked glycan (1 site)"/>
</dbReference>
<dbReference type="iPTMnet" id="Q9HAV7"/>
<dbReference type="MetOSite" id="Q9HAV7"/>
<dbReference type="PhosphoSitePlus" id="Q9HAV7"/>
<dbReference type="SwissPalm" id="Q9HAV7"/>
<dbReference type="BioMuta" id="GRPEL1"/>
<dbReference type="DMDM" id="18202951"/>
<dbReference type="jPOST" id="Q9HAV7"/>
<dbReference type="MassIVE" id="Q9HAV7"/>
<dbReference type="PaxDb" id="9606-ENSP00000264954"/>
<dbReference type="PeptideAtlas" id="Q9HAV7"/>
<dbReference type="ProteomicsDB" id="81449"/>
<dbReference type="Pumba" id="Q9HAV7"/>
<dbReference type="TopDownProteomics" id="Q9HAV7"/>
<dbReference type="Antibodypedia" id="22707">
    <property type="antibodies" value="155 antibodies from 25 providers"/>
</dbReference>
<dbReference type="DNASU" id="80273"/>
<dbReference type="Ensembl" id="ENST00000264954.5">
    <property type="protein sequence ID" value="ENSP00000264954.4"/>
    <property type="gene ID" value="ENSG00000109519.14"/>
</dbReference>
<dbReference type="GeneID" id="80273"/>
<dbReference type="KEGG" id="hsa:80273"/>
<dbReference type="MANE-Select" id="ENST00000264954.5">
    <property type="protein sequence ID" value="ENSP00000264954.4"/>
    <property type="RefSeq nucleotide sequence ID" value="NM_025196.4"/>
    <property type="RefSeq protein sequence ID" value="NP_079472.1"/>
</dbReference>
<dbReference type="UCSC" id="uc003gjy.2">
    <property type="organism name" value="human"/>
</dbReference>
<dbReference type="AGR" id="HGNC:19696"/>
<dbReference type="CTD" id="80273"/>
<dbReference type="DisGeNET" id="80273"/>
<dbReference type="GeneCards" id="GRPEL1"/>
<dbReference type="HGNC" id="HGNC:19696">
    <property type="gene designation" value="GRPEL1"/>
</dbReference>
<dbReference type="HPA" id="ENSG00000109519">
    <property type="expression patterns" value="Low tissue specificity"/>
</dbReference>
<dbReference type="MIM" id="606173">
    <property type="type" value="gene"/>
</dbReference>
<dbReference type="neXtProt" id="NX_Q9HAV7"/>
<dbReference type="OpenTargets" id="ENSG00000109519"/>
<dbReference type="PharmGKB" id="PA134918140"/>
<dbReference type="VEuPathDB" id="HostDB:ENSG00000109519"/>
<dbReference type="eggNOG" id="KOG3003">
    <property type="taxonomic scope" value="Eukaryota"/>
</dbReference>
<dbReference type="GeneTree" id="ENSGT00390000005589"/>
<dbReference type="HOGENOM" id="CLU_057217_0_1_1"/>
<dbReference type="InParanoid" id="Q9HAV7"/>
<dbReference type="OMA" id="PHRHQAI"/>
<dbReference type="OrthoDB" id="201635at2759"/>
<dbReference type="PAN-GO" id="Q9HAV7">
    <property type="GO annotations" value="4 GO annotations based on evolutionary models"/>
</dbReference>
<dbReference type="PhylomeDB" id="Q9HAV7"/>
<dbReference type="TreeFam" id="TF105284"/>
<dbReference type="PathwayCommons" id="Q9HAV7"/>
<dbReference type="Reactome" id="R-HSA-1268020">
    <property type="pathway name" value="Mitochondrial protein import"/>
</dbReference>
<dbReference type="SignaLink" id="Q9HAV7"/>
<dbReference type="SIGNOR" id="Q9HAV7"/>
<dbReference type="BioGRID-ORCS" id="80273">
    <property type="hits" value="814 hits in 1170 CRISPR screens"/>
</dbReference>
<dbReference type="CD-CODE" id="91857CE7">
    <property type="entry name" value="Nucleolus"/>
</dbReference>
<dbReference type="ChiTaRS" id="GRPEL1">
    <property type="organism name" value="human"/>
</dbReference>
<dbReference type="GenomeRNAi" id="80273"/>
<dbReference type="Pharos" id="Q9HAV7">
    <property type="development level" value="Tbio"/>
</dbReference>
<dbReference type="PRO" id="PR:Q9HAV7"/>
<dbReference type="Proteomes" id="UP000005640">
    <property type="component" value="Chromosome 4"/>
</dbReference>
<dbReference type="RNAct" id="Q9HAV7">
    <property type="molecule type" value="protein"/>
</dbReference>
<dbReference type="Bgee" id="ENSG00000109519">
    <property type="expression patterns" value="Expressed in left adrenal gland and 193 other cell types or tissues"/>
</dbReference>
<dbReference type="GO" id="GO:0005743">
    <property type="term" value="C:mitochondrial inner membrane"/>
    <property type="evidence" value="ECO:0000303"/>
    <property type="project" value="ComplexPortal"/>
</dbReference>
<dbReference type="GO" id="GO:0005759">
    <property type="term" value="C:mitochondrial matrix"/>
    <property type="evidence" value="ECO:0000314"/>
    <property type="project" value="UniProtKB"/>
</dbReference>
<dbReference type="GO" id="GO:0005739">
    <property type="term" value="C:mitochondrion"/>
    <property type="evidence" value="ECO:0000314"/>
    <property type="project" value="HPA"/>
</dbReference>
<dbReference type="GO" id="GO:0005654">
    <property type="term" value="C:nucleoplasm"/>
    <property type="evidence" value="ECO:0000314"/>
    <property type="project" value="HPA"/>
</dbReference>
<dbReference type="GO" id="GO:0001405">
    <property type="term" value="C:PAM complex, Tim23 associated import motor"/>
    <property type="evidence" value="ECO:0000318"/>
    <property type="project" value="GO_Central"/>
</dbReference>
<dbReference type="GO" id="GO:0005744">
    <property type="term" value="C:TIM23 mitochondrial import inner membrane translocase complex"/>
    <property type="evidence" value="ECO:0000303"/>
    <property type="project" value="ComplexPortal"/>
</dbReference>
<dbReference type="GO" id="GO:0000774">
    <property type="term" value="F:adenyl-nucleotide exchange factor activity"/>
    <property type="evidence" value="ECO:0000318"/>
    <property type="project" value="GO_Central"/>
</dbReference>
<dbReference type="GO" id="GO:0042802">
    <property type="term" value="F:identical protein binding"/>
    <property type="evidence" value="ECO:0000353"/>
    <property type="project" value="IntAct"/>
</dbReference>
<dbReference type="GO" id="GO:0042803">
    <property type="term" value="F:protein homodimerization activity"/>
    <property type="evidence" value="ECO:0007669"/>
    <property type="project" value="InterPro"/>
</dbReference>
<dbReference type="GO" id="GO:0051087">
    <property type="term" value="F:protein-folding chaperone binding"/>
    <property type="evidence" value="ECO:0007669"/>
    <property type="project" value="InterPro"/>
</dbReference>
<dbReference type="GO" id="GO:0051082">
    <property type="term" value="F:unfolded protein binding"/>
    <property type="evidence" value="ECO:0000314"/>
    <property type="project" value="UniProtKB"/>
</dbReference>
<dbReference type="GO" id="GO:0006886">
    <property type="term" value="P:intracellular protein transport"/>
    <property type="evidence" value="ECO:0000303"/>
    <property type="project" value="ComplexPortal"/>
</dbReference>
<dbReference type="GO" id="GO:0006457">
    <property type="term" value="P:protein folding"/>
    <property type="evidence" value="ECO:0007669"/>
    <property type="project" value="InterPro"/>
</dbReference>
<dbReference type="GO" id="GO:0030150">
    <property type="term" value="P:protein import into mitochondrial matrix"/>
    <property type="evidence" value="ECO:0000318"/>
    <property type="project" value="GO_Central"/>
</dbReference>
<dbReference type="CDD" id="cd00446">
    <property type="entry name" value="GrpE"/>
    <property type="match status" value="1"/>
</dbReference>
<dbReference type="FunFam" id="2.30.22.10:FF:000002">
    <property type="entry name" value="GrpE protein homolog"/>
    <property type="match status" value="1"/>
</dbReference>
<dbReference type="FunFam" id="3.90.20.20:FF:000003">
    <property type="entry name" value="GrpE protein homolog"/>
    <property type="match status" value="1"/>
</dbReference>
<dbReference type="Gene3D" id="3.90.20.20">
    <property type="match status" value="1"/>
</dbReference>
<dbReference type="Gene3D" id="2.30.22.10">
    <property type="entry name" value="Head domain of nucleotide exchange factor GrpE"/>
    <property type="match status" value="1"/>
</dbReference>
<dbReference type="HAMAP" id="MF_01151">
    <property type="entry name" value="GrpE"/>
    <property type="match status" value="1"/>
</dbReference>
<dbReference type="InterPro" id="IPR000740">
    <property type="entry name" value="GrpE"/>
</dbReference>
<dbReference type="InterPro" id="IPR013805">
    <property type="entry name" value="GrpE_coiled_coil"/>
</dbReference>
<dbReference type="InterPro" id="IPR009012">
    <property type="entry name" value="GrpE_head"/>
</dbReference>
<dbReference type="PANTHER" id="PTHR21237">
    <property type="entry name" value="GRPE PROTEIN"/>
    <property type="match status" value="1"/>
</dbReference>
<dbReference type="PANTHER" id="PTHR21237:SF25">
    <property type="entry name" value="GRPE PROTEIN HOMOLOG 1, MITOCHONDRIAL"/>
    <property type="match status" value="1"/>
</dbReference>
<dbReference type="Pfam" id="PF01025">
    <property type="entry name" value="GrpE"/>
    <property type="match status" value="1"/>
</dbReference>
<dbReference type="PRINTS" id="PR00773">
    <property type="entry name" value="GRPEPROTEIN"/>
</dbReference>
<dbReference type="SUPFAM" id="SSF58014">
    <property type="entry name" value="Coiled-coil domain of nucleotide exchange factor GrpE"/>
    <property type="match status" value="1"/>
</dbReference>
<dbReference type="SUPFAM" id="SSF51064">
    <property type="entry name" value="Head domain of nucleotide exchange factor GrpE"/>
    <property type="match status" value="1"/>
</dbReference>
<dbReference type="PROSITE" id="PS01071">
    <property type="entry name" value="GRPE"/>
    <property type="match status" value="1"/>
</dbReference>
<evidence type="ECO:0000250" key="1"/>
<evidence type="ECO:0000250" key="2">
    <source>
        <dbReference type="UniProtKB" id="P38523"/>
    </source>
</evidence>
<evidence type="ECO:0000250" key="3">
    <source>
        <dbReference type="UniProtKB" id="Q99LP6"/>
    </source>
</evidence>
<evidence type="ECO:0000256" key="4">
    <source>
        <dbReference type="SAM" id="MobiDB-lite"/>
    </source>
</evidence>
<evidence type="ECO:0000269" key="5">
    <source>
    </source>
</evidence>
<evidence type="ECO:0000305" key="6"/>
<evidence type="ECO:0007744" key="7">
    <source>
    </source>
</evidence>
<keyword id="KW-0002">3D-structure</keyword>
<keyword id="KW-0007">Acetylation</keyword>
<keyword id="KW-0143">Chaperone</keyword>
<keyword id="KW-0496">Mitochondrion</keyword>
<keyword id="KW-1267">Proteomics identification</keyword>
<keyword id="KW-1185">Reference proteome</keyword>
<keyword id="KW-0809">Transit peptide</keyword>
<protein>
    <recommendedName>
        <fullName>GrpE protein homolog 1, mitochondrial</fullName>
    </recommendedName>
    <alternativeName>
        <fullName>HMGE</fullName>
    </alternativeName>
    <alternativeName>
        <fullName>Mt-GrpE#1</fullName>
    </alternativeName>
</protein>